<gene>
    <name type="ORF">DDB_G0280307</name>
</gene>
<proteinExistence type="inferred from homology"/>
<accession>Q54VJ1</accession>
<comment type="subcellular location">
    <subcellularLocation>
        <location evidence="2">Secreted</location>
    </subcellularLocation>
</comment>
<comment type="similarity">
    <text evidence="2">Belongs to the beta-lactamase family.</text>
</comment>
<keyword id="KW-0325">Glycoprotein</keyword>
<keyword id="KW-1185">Reference proteome</keyword>
<keyword id="KW-0964">Secreted</keyword>
<keyword id="KW-0732">Signal</keyword>
<feature type="signal peptide" evidence="1">
    <location>
        <begin position="1"/>
        <end position="24"/>
    </location>
</feature>
<feature type="chain" id="PRO_0000343694" description="Beta-lactamase-like protein 2">
    <location>
        <begin position="25"/>
        <end position="548"/>
    </location>
</feature>
<feature type="glycosylation site" description="N-linked (GlcNAc...) asparagine" evidence="1">
    <location>
        <position position="237"/>
    </location>
</feature>
<feature type="glycosylation site" description="N-linked (GlcNAc...) asparagine" evidence="1">
    <location>
        <position position="258"/>
    </location>
</feature>
<feature type="glycosylation site" description="N-linked (GlcNAc...) asparagine" evidence="1">
    <location>
        <position position="443"/>
    </location>
</feature>
<feature type="glycosylation site" description="N-linked (GlcNAc...) asparagine" evidence="1">
    <location>
        <position position="459"/>
    </location>
</feature>
<organism>
    <name type="scientific">Dictyostelium discoideum</name>
    <name type="common">Social amoeba</name>
    <dbReference type="NCBI Taxonomy" id="44689"/>
    <lineage>
        <taxon>Eukaryota</taxon>
        <taxon>Amoebozoa</taxon>
        <taxon>Evosea</taxon>
        <taxon>Eumycetozoa</taxon>
        <taxon>Dictyostelia</taxon>
        <taxon>Dictyosteliales</taxon>
        <taxon>Dictyosteliaceae</taxon>
        <taxon>Dictyostelium</taxon>
    </lineage>
</organism>
<sequence length="548" mass="62210">MKIMNKQSITIFLIICFLINLILSCPNYPEPIKINQNDPTLQKAYKEVDEIIKKGMKDNGIKSFIASIVYRDEIVWSKTYGNVNPLDENSPPLTIDNAIRIASITKTFTDLMMFQLRDKGTISSLDDEVSKYFPEFSIGNLYNTKKSPTFRELSSHQSGLPREVPCDFDDLADWDICSEEVIIERLSKMFLIMPSYQSTHYSNLGIALLGRTLAKAANTEYEKYVKEKILFPLGMMNSSFYYDDVKDYLAQGLILWPNGSYTISPVEELGWSNPMGNLYSTARDMCNYMMFWLNENPEILDSTTLNEAMSPISLLNDGDTVYGTPFEMFYDQANSIWVKSKAGQLSGYRTQMALIRPLKIGMLFSSLLAFQTPDVFTKAASEILIPVYEQLLYEAGSQPQSPFIPDSKLKPTLTTEKYSKEIPNDAFVGTYTNSEGSIFIVDNSTGLLIANFGDDNLFNVSRFSDQYPEILRIKVSNPQDYLCRYVVDGSNYELVYFTITSTPFGGIECNSVTAMGQTMTLASKDPQYLKNNNIEFEKRNKLISKFLQ</sequence>
<name>BLML2_DICDI</name>
<protein>
    <recommendedName>
        <fullName>Beta-lactamase-like protein 2</fullName>
    </recommendedName>
</protein>
<evidence type="ECO:0000255" key="1"/>
<evidence type="ECO:0000305" key="2"/>
<dbReference type="EMBL" id="AAFI02000035">
    <property type="protein sequence ID" value="EAL67380.1"/>
    <property type="molecule type" value="Genomic_DNA"/>
</dbReference>
<dbReference type="RefSeq" id="XP_641364.1">
    <property type="nucleotide sequence ID" value="XM_636272.1"/>
</dbReference>
<dbReference type="SMR" id="Q54VJ1"/>
<dbReference type="FunCoup" id="Q54VJ1">
    <property type="interactions" value="3"/>
</dbReference>
<dbReference type="STRING" id="44689.Q54VJ1"/>
<dbReference type="MEROPS" id="S12.A24"/>
<dbReference type="GlyGen" id="Q54VJ1">
    <property type="glycosylation" value="4 sites"/>
</dbReference>
<dbReference type="PaxDb" id="44689-DDB0238809"/>
<dbReference type="EnsemblProtists" id="EAL67380">
    <property type="protein sequence ID" value="EAL67380"/>
    <property type="gene ID" value="DDB_G0280307"/>
</dbReference>
<dbReference type="GeneID" id="8622498"/>
<dbReference type="KEGG" id="ddi:DDB_G0280307"/>
<dbReference type="dictyBase" id="DDB_G0280307"/>
<dbReference type="VEuPathDB" id="AmoebaDB:DDB_G0280307"/>
<dbReference type="eggNOG" id="ENOG502RSTE">
    <property type="taxonomic scope" value="Eukaryota"/>
</dbReference>
<dbReference type="HOGENOM" id="CLU_472095_0_0_1"/>
<dbReference type="InParanoid" id="Q54VJ1"/>
<dbReference type="OMA" id="PINEYTI"/>
<dbReference type="PhylomeDB" id="Q54VJ1"/>
<dbReference type="PRO" id="PR:Q54VJ1"/>
<dbReference type="Proteomes" id="UP000002195">
    <property type="component" value="Chromosome 3"/>
</dbReference>
<dbReference type="GO" id="GO:0005576">
    <property type="term" value="C:extracellular region"/>
    <property type="evidence" value="ECO:0007669"/>
    <property type="project" value="UniProtKB-SubCell"/>
</dbReference>
<dbReference type="Gene3D" id="3.40.710.10">
    <property type="entry name" value="DD-peptidase/beta-lactamase superfamily"/>
    <property type="match status" value="1"/>
</dbReference>
<dbReference type="InterPro" id="IPR001466">
    <property type="entry name" value="Beta-lactam-related"/>
</dbReference>
<dbReference type="InterPro" id="IPR012338">
    <property type="entry name" value="Beta-lactam/transpept-like"/>
</dbReference>
<dbReference type="InterPro" id="IPR051478">
    <property type="entry name" value="Beta-lactamase-like_AB/R"/>
</dbReference>
<dbReference type="PANTHER" id="PTHR22935:SF94">
    <property type="entry name" value="BETA-LACTAMASE-LIKE PROTEIN 2"/>
    <property type="match status" value="1"/>
</dbReference>
<dbReference type="PANTHER" id="PTHR22935">
    <property type="entry name" value="PENICILLIN-BINDING PROTEIN"/>
    <property type="match status" value="1"/>
</dbReference>
<dbReference type="Pfam" id="PF00144">
    <property type="entry name" value="Beta-lactamase"/>
    <property type="match status" value="1"/>
</dbReference>
<dbReference type="SUPFAM" id="SSF56601">
    <property type="entry name" value="beta-lactamase/transpeptidase-like"/>
    <property type="match status" value="1"/>
</dbReference>
<reference key="1">
    <citation type="journal article" date="2005" name="Nature">
        <title>The genome of the social amoeba Dictyostelium discoideum.</title>
        <authorList>
            <person name="Eichinger L."/>
            <person name="Pachebat J.A."/>
            <person name="Gloeckner G."/>
            <person name="Rajandream M.A."/>
            <person name="Sucgang R."/>
            <person name="Berriman M."/>
            <person name="Song J."/>
            <person name="Olsen R."/>
            <person name="Szafranski K."/>
            <person name="Xu Q."/>
            <person name="Tunggal B."/>
            <person name="Kummerfeld S."/>
            <person name="Madera M."/>
            <person name="Konfortov B.A."/>
            <person name="Rivero F."/>
            <person name="Bankier A.T."/>
            <person name="Lehmann R."/>
            <person name="Hamlin N."/>
            <person name="Davies R."/>
            <person name="Gaudet P."/>
            <person name="Fey P."/>
            <person name="Pilcher K."/>
            <person name="Chen G."/>
            <person name="Saunders D."/>
            <person name="Sodergren E.J."/>
            <person name="Davis P."/>
            <person name="Kerhornou A."/>
            <person name="Nie X."/>
            <person name="Hall N."/>
            <person name="Anjard C."/>
            <person name="Hemphill L."/>
            <person name="Bason N."/>
            <person name="Farbrother P."/>
            <person name="Desany B."/>
            <person name="Just E."/>
            <person name="Morio T."/>
            <person name="Rost R."/>
            <person name="Churcher C.M."/>
            <person name="Cooper J."/>
            <person name="Haydock S."/>
            <person name="van Driessche N."/>
            <person name="Cronin A."/>
            <person name="Goodhead I."/>
            <person name="Muzny D.M."/>
            <person name="Mourier T."/>
            <person name="Pain A."/>
            <person name="Lu M."/>
            <person name="Harper D."/>
            <person name="Lindsay R."/>
            <person name="Hauser H."/>
            <person name="James K.D."/>
            <person name="Quiles M."/>
            <person name="Madan Babu M."/>
            <person name="Saito T."/>
            <person name="Buchrieser C."/>
            <person name="Wardroper A."/>
            <person name="Felder M."/>
            <person name="Thangavelu M."/>
            <person name="Johnson D."/>
            <person name="Knights A."/>
            <person name="Loulseged H."/>
            <person name="Mungall K.L."/>
            <person name="Oliver K."/>
            <person name="Price C."/>
            <person name="Quail M.A."/>
            <person name="Urushihara H."/>
            <person name="Hernandez J."/>
            <person name="Rabbinowitsch E."/>
            <person name="Steffen D."/>
            <person name="Sanders M."/>
            <person name="Ma J."/>
            <person name="Kohara Y."/>
            <person name="Sharp S."/>
            <person name="Simmonds M.N."/>
            <person name="Spiegler S."/>
            <person name="Tivey A."/>
            <person name="Sugano S."/>
            <person name="White B."/>
            <person name="Walker D."/>
            <person name="Woodward J.R."/>
            <person name="Winckler T."/>
            <person name="Tanaka Y."/>
            <person name="Shaulsky G."/>
            <person name="Schleicher M."/>
            <person name="Weinstock G.M."/>
            <person name="Rosenthal A."/>
            <person name="Cox E.C."/>
            <person name="Chisholm R.L."/>
            <person name="Gibbs R.A."/>
            <person name="Loomis W.F."/>
            <person name="Platzer M."/>
            <person name="Kay R.R."/>
            <person name="Williams J.G."/>
            <person name="Dear P.H."/>
            <person name="Noegel A.A."/>
            <person name="Barrell B.G."/>
            <person name="Kuspa A."/>
        </authorList>
    </citation>
    <scope>NUCLEOTIDE SEQUENCE [LARGE SCALE GENOMIC DNA]</scope>
    <source>
        <strain>AX4</strain>
    </source>
</reference>